<evidence type="ECO:0000255" key="1">
    <source>
        <dbReference type="HAMAP-Rule" id="MF_02016"/>
    </source>
</evidence>
<evidence type="ECO:0000256" key="2">
    <source>
        <dbReference type="SAM" id="MobiDB-lite"/>
    </source>
</evidence>
<evidence type="ECO:0000305" key="3"/>
<reference key="1">
    <citation type="journal article" date="2006" name="Genome Biol.">
        <title>Genomic analysis reveals that Pseudomonas aeruginosa virulence is combinatorial.</title>
        <authorList>
            <person name="Lee D.G."/>
            <person name="Urbach J.M."/>
            <person name="Wu G."/>
            <person name="Liberati N.T."/>
            <person name="Feinbaum R.L."/>
            <person name="Miyata S."/>
            <person name="Diggins L.T."/>
            <person name="He J."/>
            <person name="Saucier M."/>
            <person name="Deziel E."/>
            <person name="Friedman L."/>
            <person name="Li L."/>
            <person name="Grills G."/>
            <person name="Montgomery K."/>
            <person name="Kucherlapati R."/>
            <person name="Rahme L.G."/>
            <person name="Ausubel F.M."/>
        </authorList>
    </citation>
    <scope>NUCLEOTIDE SEQUENCE [LARGE SCALE GENOMIC DNA]</scope>
    <source>
        <strain>UCBPP-PA14</strain>
    </source>
</reference>
<feature type="signal peptide" evidence="1">
    <location>
        <begin position="1"/>
        <end position="32"/>
    </location>
</feature>
<feature type="chain" id="PRO_0000353956" description="Membrane-bound lytic murein transglycosylase F">
    <location>
        <begin position="33"/>
        <end position="489"/>
    </location>
</feature>
<feature type="region of interest" description="Non-LT domain" evidence="1">
    <location>
        <begin position="33"/>
        <end position="268"/>
    </location>
</feature>
<feature type="region of interest" description="LT domain" evidence="1">
    <location>
        <begin position="269"/>
        <end position="489"/>
    </location>
</feature>
<feature type="region of interest" description="Disordered" evidence="2">
    <location>
        <begin position="466"/>
        <end position="489"/>
    </location>
</feature>
<feature type="compositionally biased region" description="Basic and acidic residues" evidence="2">
    <location>
        <begin position="478"/>
        <end position="489"/>
    </location>
</feature>
<feature type="active site" evidence="1">
    <location>
        <position position="315"/>
    </location>
</feature>
<organism>
    <name type="scientific">Pseudomonas aeruginosa (strain UCBPP-PA14)</name>
    <dbReference type="NCBI Taxonomy" id="208963"/>
    <lineage>
        <taxon>Bacteria</taxon>
        <taxon>Pseudomonadati</taxon>
        <taxon>Pseudomonadota</taxon>
        <taxon>Gammaproteobacteria</taxon>
        <taxon>Pseudomonadales</taxon>
        <taxon>Pseudomonadaceae</taxon>
        <taxon>Pseudomonas</taxon>
    </lineage>
</organism>
<gene>
    <name evidence="1" type="primary">mltF</name>
    <name type="ordered locus">PA14_15720</name>
</gene>
<name>MLTF_PSEAB</name>
<proteinExistence type="inferred from homology"/>
<dbReference type="EC" id="4.2.2.n1" evidence="1"/>
<dbReference type="EMBL" id="CP000438">
    <property type="protein sequence ID" value="ABJ12999.1"/>
    <property type="status" value="ALT_INIT"/>
    <property type="molecule type" value="Genomic_DNA"/>
</dbReference>
<dbReference type="RefSeq" id="WP_016254283.1">
    <property type="nucleotide sequence ID" value="NZ_CP034244.1"/>
</dbReference>
<dbReference type="SMR" id="Q02RN8"/>
<dbReference type="CAZy" id="GH23">
    <property type="family name" value="Glycoside Hydrolase Family 23"/>
</dbReference>
<dbReference type="KEGG" id="pau:PA14_15720"/>
<dbReference type="PseudoCAP" id="PA14_15720"/>
<dbReference type="HOGENOM" id="CLU_027494_0_1_6"/>
<dbReference type="BioCyc" id="PAER208963:G1G74-1294-MONOMER"/>
<dbReference type="Proteomes" id="UP000000653">
    <property type="component" value="Chromosome"/>
</dbReference>
<dbReference type="GO" id="GO:0009279">
    <property type="term" value="C:cell outer membrane"/>
    <property type="evidence" value="ECO:0007669"/>
    <property type="project" value="UniProtKB-SubCell"/>
</dbReference>
<dbReference type="GO" id="GO:0008933">
    <property type="term" value="F:peptidoglycan lytic transglycosylase activity"/>
    <property type="evidence" value="ECO:0007669"/>
    <property type="project" value="UniProtKB-UniRule"/>
</dbReference>
<dbReference type="GO" id="GO:0016998">
    <property type="term" value="P:cell wall macromolecule catabolic process"/>
    <property type="evidence" value="ECO:0007669"/>
    <property type="project" value="UniProtKB-UniRule"/>
</dbReference>
<dbReference type="GO" id="GO:0071555">
    <property type="term" value="P:cell wall organization"/>
    <property type="evidence" value="ECO:0007669"/>
    <property type="project" value="UniProtKB-KW"/>
</dbReference>
<dbReference type="GO" id="GO:0009253">
    <property type="term" value="P:peptidoglycan catabolic process"/>
    <property type="evidence" value="ECO:0007669"/>
    <property type="project" value="TreeGrafter"/>
</dbReference>
<dbReference type="CDD" id="cd13403">
    <property type="entry name" value="MLTF-like"/>
    <property type="match status" value="1"/>
</dbReference>
<dbReference type="CDD" id="cd01009">
    <property type="entry name" value="PBP2_YfhD_N"/>
    <property type="match status" value="1"/>
</dbReference>
<dbReference type="Gene3D" id="1.10.530.10">
    <property type="match status" value="1"/>
</dbReference>
<dbReference type="Gene3D" id="3.40.190.10">
    <property type="entry name" value="Periplasmic binding protein-like II"/>
    <property type="match status" value="2"/>
</dbReference>
<dbReference type="HAMAP" id="MF_02016">
    <property type="entry name" value="MltF"/>
    <property type="match status" value="1"/>
</dbReference>
<dbReference type="InterPro" id="IPR023346">
    <property type="entry name" value="Lysozyme-like_dom_sf"/>
</dbReference>
<dbReference type="InterPro" id="IPR023703">
    <property type="entry name" value="MltF"/>
</dbReference>
<dbReference type="InterPro" id="IPR001638">
    <property type="entry name" value="Solute-binding_3/MltF_N"/>
</dbReference>
<dbReference type="InterPro" id="IPR000189">
    <property type="entry name" value="Transglyc_AS"/>
</dbReference>
<dbReference type="InterPro" id="IPR008258">
    <property type="entry name" value="Transglycosylase_SLT_dom_1"/>
</dbReference>
<dbReference type="NCBIfam" id="NF008112">
    <property type="entry name" value="PRK10859.1"/>
    <property type="match status" value="1"/>
</dbReference>
<dbReference type="PANTHER" id="PTHR35936">
    <property type="entry name" value="MEMBRANE-BOUND LYTIC MUREIN TRANSGLYCOSYLASE F"/>
    <property type="match status" value="1"/>
</dbReference>
<dbReference type="PANTHER" id="PTHR35936:SF32">
    <property type="entry name" value="MEMBRANE-BOUND LYTIC MUREIN TRANSGLYCOSYLASE F"/>
    <property type="match status" value="1"/>
</dbReference>
<dbReference type="Pfam" id="PF00497">
    <property type="entry name" value="SBP_bac_3"/>
    <property type="match status" value="1"/>
</dbReference>
<dbReference type="Pfam" id="PF01464">
    <property type="entry name" value="SLT"/>
    <property type="match status" value="1"/>
</dbReference>
<dbReference type="SMART" id="SM00062">
    <property type="entry name" value="PBPb"/>
    <property type="match status" value="1"/>
</dbReference>
<dbReference type="SUPFAM" id="SSF53955">
    <property type="entry name" value="Lysozyme-like"/>
    <property type="match status" value="1"/>
</dbReference>
<dbReference type="SUPFAM" id="SSF53850">
    <property type="entry name" value="Periplasmic binding protein-like II"/>
    <property type="match status" value="1"/>
</dbReference>
<dbReference type="PROSITE" id="PS00922">
    <property type="entry name" value="TRANSGLYCOSYLASE"/>
    <property type="match status" value="1"/>
</dbReference>
<accession>Q02RN8</accession>
<sequence length="489" mass="55111">MFALTAYRLRCAAWLLATGIFLLLAGCSEAKAPTALERVQKEGVLRVITRNSPATYFQDRNGETGFEYELAKRFAERLGVELKIETADNLDDLYAQLSREGGPALAAAGLTPGREDDASVRYSHTYLDVTPQIIYRNGQQRPTRPEDLVGKRIMVLKGSSHAEQLAELKKQYPELKYEESDAVEVVDLLRMVDVGDIDLTLVDSNELAMNQVYFPNVRVAFDFGEARGLAWALPGGDDSLMNEVNAFLDQAKKEGLLQRLKDRYYGHVDVLGYVGAYTFAQHLQQRLPRYESHFKQSGKQLDTDWRLLAAIGYQESLWQPGATSKTGVRGLMMLTNRTAQAMGVSNRLDPKQSIQGGSKYFVQIRSELPESIKEPDRSWFALAAYNIGGAHLEDARKMAEKEGLNPNKWLDVKKMLPRLAQKQWYAKTRYGYARGGETVHFVQNVRRYYDILTWVTQPQMEGSQIAESGLHLPGVNKTRPEEDSGDEKL</sequence>
<protein>
    <recommendedName>
        <fullName evidence="1">Membrane-bound lytic murein transglycosylase F</fullName>
        <ecNumber evidence="1">4.2.2.n1</ecNumber>
    </recommendedName>
    <alternativeName>
        <fullName evidence="1">Murein lyase F</fullName>
    </alternativeName>
</protein>
<keyword id="KW-0998">Cell outer membrane</keyword>
<keyword id="KW-0961">Cell wall biogenesis/degradation</keyword>
<keyword id="KW-0456">Lyase</keyword>
<keyword id="KW-0472">Membrane</keyword>
<keyword id="KW-0732">Signal</keyword>
<comment type="function">
    <text evidence="1">Murein-degrading enzyme that degrades murein glycan strands and insoluble, high-molecular weight murein sacculi, with the concomitant formation of a 1,6-anhydromuramoyl product. Lytic transglycosylases (LTs) play an integral role in the metabolism of the peptidoglycan (PG) sacculus. Their lytic action creates space within the PG sacculus to allow for its expansion as well as for the insertion of various structures such as secretion systems and flagella.</text>
</comment>
<comment type="catalytic activity">
    <reaction evidence="1">
        <text>Exolytic cleavage of the (1-&gt;4)-beta-glycosidic linkage between N-acetylmuramic acid (MurNAc) and N-acetylglucosamine (GlcNAc) residues in peptidoglycan, from either the reducing or the non-reducing ends of the peptidoglycan chains, with concomitant formation of a 1,6-anhydrobond in the MurNAc residue.</text>
        <dbReference type="EC" id="4.2.2.n1"/>
    </reaction>
</comment>
<comment type="subcellular location">
    <subcellularLocation>
        <location>Cell outer membrane</location>
        <topology>Peripheral membrane protein</topology>
    </subcellularLocation>
    <text evidence="1">Attached to the inner leaflet of the outer membrane.</text>
</comment>
<comment type="domain">
    <text evidence="1">The N-terminal domain does not have lytic activity and probably modulates enzymatic activity. The C-terminal domain is the catalytic active domain.</text>
</comment>
<comment type="similarity">
    <text evidence="1">In the N-terminal section; belongs to the bacterial solute-binding protein 3 family.</text>
</comment>
<comment type="similarity">
    <text evidence="1">In the C-terminal section; belongs to the transglycosylase Slt family.</text>
</comment>
<comment type="sequence caution" evidence="3">
    <conflict type="erroneous initiation">
        <sequence resource="EMBL-CDS" id="ABJ12999"/>
    </conflict>
</comment>